<gene>
    <name evidence="1" type="primary">rpl13e</name>
    <name type="ordered locus">APE_0537a</name>
    <name type="ORF">APES024</name>
</gene>
<accession>Q9YEN9</accession>
<protein>
    <recommendedName>
        <fullName evidence="1">Large ribosomal subunit protein eL13</fullName>
    </recommendedName>
    <alternativeName>
        <fullName evidence="2">50S ribosomal protein L13e</fullName>
    </alternativeName>
</protein>
<proteinExistence type="inferred from homology"/>
<dbReference type="EMBL" id="BA000002">
    <property type="protein sequence ID" value="BAA79507.1"/>
    <property type="status" value="ALT_INIT"/>
    <property type="molecule type" value="Genomic_DNA"/>
</dbReference>
<dbReference type="PIR" id="C72638">
    <property type="entry name" value="C72638"/>
</dbReference>
<dbReference type="SMR" id="Q9YEN9"/>
<dbReference type="STRING" id="272557.APE_0537a"/>
<dbReference type="EnsemblBacteria" id="BAA79507">
    <property type="protein sequence ID" value="BAA79507"/>
    <property type="gene ID" value="APE_0537a"/>
</dbReference>
<dbReference type="KEGG" id="ape:APE_0537a"/>
<dbReference type="eggNOG" id="arCOG01013">
    <property type="taxonomic scope" value="Archaea"/>
</dbReference>
<dbReference type="Proteomes" id="UP000002518">
    <property type="component" value="Chromosome"/>
</dbReference>
<dbReference type="GO" id="GO:1990904">
    <property type="term" value="C:ribonucleoprotein complex"/>
    <property type="evidence" value="ECO:0007669"/>
    <property type="project" value="UniProtKB-KW"/>
</dbReference>
<dbReference type="GO" id="GO:0005840">
    <property type="term" value="C:ribosome"/>
    <property type="evidence" value="ECO:0007669"/>
    <property type="project" value="UniProtKB-KW"/>
</dbReference>
<dbReference type="GO" id="GO:0003735">
    <property type="term" value="F:structural constituent of ribosome"/>
    <property type="evidence" value="ECO:0007669"/>
    <property type="project" value="InterPro"/>
</dbReference>
<dbReference type="GO" id="GO:0006412">
    <property type="term" value="P:translation"/>
    <property type="evidence" value="ECO:0007669"/>
    <property type="project" value="UniProtKB-UniRule"/>
</dbReference>
<dbReference type="HAMAP" id="MF_00499">
    <property type="entry name" value="Ribosomal_eL13"/>
    <property type="match status" value="1"/>
</dbReference>
<dbReference type="InterPro" id="IPR001380">
    <property type="entry name" value="Ribosomal_eL13"/>
</dbReference>
<dbReference type="InterPro" id="IPR018256">
    <property type="entry name" value="Ribosomal_eL13_CS"/>
</dbReference>
<dbReference type="NCBIfam" id="NF008914">
    <property type="entry name" value="PRK12277.1"/>
    <property type="match status" value="1"/>
</dbReference>
<dbReference type="Pfam" id="PF01294">
    <property type="entry name" value="Ribosomal_L13e"/>
    <property type="match status" value="1"/>
</dbReference>
<dbReference type="PROSITE" id="PS01104">
    <property type="entry name" value="RIBOSOMAL_L13E"/>
    <property type="match status" value="1"/>
</dbReference>
<feature type="chain" id="PRO_0000192940" description="Large ribosomal subunit protein eL13">
    <location>
        <begin position="1"/>
        <end position="80"/>
    </location>
</feature>
<name>RL13E_AERPE</name>
<keyword id="KW-1185">Reference proteome</keyword>
<keyword id="KW-0687">Ribonucleoprotein</keyword>
<keyword id="KW-0689">Ribosomal protein</keyword>
<evidence type="ECO:0000255" key="1">
    <source>
        <dbReference type="HAMAP-Rule" id="MF_00499"/>
    </source>
</evidence>
<evidence type="ECO:0000305" key="2"/>
<reference key="1">
    <citation type="journal article" date="1999" name="DNA Res.">
        <title>Complete genome sequence of an aerobic hyper-thermophilic crenarchaeon, Aeropyrum pernix K1.</title>
        <authorList>
            <person name="Kawarabayasi Y."/>
            <person name="Hino Y."/>
            <person name="Horikawa H."/>
            <person name="Yamazaki S."/>
            <person name="Haikawa Y."/>
            <person name="Jin-no K."/>
            <person name="Takahashi M."/>
            <person name="Sekine M."/>
            <person name="Baba S."/>
            <person name="Ankai A."/>
            <person name="Kosugi H."/>
            <person name="Hosoyama A."/>
            <person name="Fukui S."/>
            <person name="Nagai Y."/>
            <person name="Nishijima K."/>
            <person name="Nakazawa H."/>
            <person name="Takamiya M."/>
            <person name="Masuda S."/>
            <person name="Funahashi T."/>
            <person name="Tanaka T."/>
            <person name="Kudoh Y."/>
            <person name="Yamazaki J."/>
            <person name="Kushida N."/>
            <person name="Oguchi A."/>
            <person name="Aoki K."/>
            <person name="Kubota K."/>
            <person name="Nakamura Y."/>
            <person name="Nomura N."/>
            <person name="Sako Y."/>
            <person name="Kikuchi H."/>
        </authorList>
    </citation>
    <scope>NUCLEOTIDE SEQUENCE [LARGE SCALE GENOMIC DNA]</scope>
    <source>
        <strain>ATCC 700893 / DSM 11879 / JCM 9820 / NBRC 100138 / K1</strain>
    </source>
</reference>
<organism>
    <name type="scientific">Aeropyrum pernix (strain ATCC 700893 / DSM 11879 / JCM 9820 / NBRC 100138 / K1)</name>
    <dbReference type="NCBI Taxonomy" id="272557"/>
    <lineage>
        <taxon>Archaea</taxon>
        <taxon>Thermoproteota</taxon>
        <taxon>Thermoprotei</taxon>
        <taxon>Desulfurococcales</taxon>
        <taxon>Desulfurococcaceae</taxon>
        <taxon>Aeropyrum</taxon>
    </lineage>
</organism>
<sequence>MEPPKAIVKKPRLVKLGPVDPGVRRGRGFSLGELAEAGLDAKKARKLGLHVDTRRRTVHPWNVEALKKYIERLREAGVEV</sequence>
<comment type="similarity">
    <text evidence="1">Belongs to the eukaryotic ribosomal protein eL13 family.</text>
</comment>
<comment type="sequence caution" evidence="2">
    <conflict type="erroneous initiation">
        <sequence resource="EMBL-CDS" id="BAA79507"/>
    </conflict>
</comment>